<gene>
    <name type="primary">RRP45</name>
    <name type="ordered locus">YDR280W</name>
    <name type="ORF">D9954.1</name>
</gene>
<proteinExistence type="evidence at protein level"/>
<name>RRP45_YEAST</name>
<evidence type="ECO:0000269" key="1">
    <source>
    </source>
</evidence>
<evidence type="ECO:0000269" key="2">
    <source>
    </source>
</evidence>
<evidence type="ECO:0000269" key="3">
    <source>
    </source>
</evidence>
<evidence type="ECO:0000269" key="4">
    <source>
    </source>
</evidence>
<evidence type="ECO:0000269" key="5">
    <source>
    </source>
</evidence>
<evidence type="ECO:0000269" key="6">
    <source>
    </source>
</evidence>
<evidence type="ECO:0000305" key="7"/>
<evidence type="ECO:0007829" key="8">
    <source>
        <dbReference type="PDB" id="2WP8"/>
    </source>
</evidence>
<evidence type="ECO:0007829" key="9">
    <source>
        <dbReference type="PDB" id="4IFD"/>
    </source>
</evidence>
<evidence type="ECO:0007829" key="10">
    <source>
        <dbReference type="PDB" id="5JEA"/>
    </source>
</evidence>
<evidence type="ECO:0007829" key="11">
    <source>
        <dbReference type="PDB" id="5OKZ"/>
    </source>
</evidence>
<dbReference type="EMBL" id="U51030">
    <property type="protein sequence ID" value="AAB64446.1"/>
    <property type="molecule type" value="Genomic_DNA"/>
</dbReference>
<dbReference type="EMBL" id="AY557748">
    <property type="protein sequence ID" value="AAS56074.1"/>
    <property type="molecule type" value="Genomic_DNA"/>
</dbReference>
<dbReference type="EMBL" id="BK006938">
    <property type="protein sequence ID" value="DAA12120.1"/>
    <property type="molecule type" value="Genomic_DNA"/>
</dbReference>
<dbReference type="PIR" id="S70136">
    <property type="entry name" value="S70136"/>
</dbReference>
<dbReference type="RefSeq" id="NP_010566.1">
    <property type="nucleotide sequence ID" value="NM_001180588.1"/>
</dbReference>
<dbReference type="PDB" id="2WP8">
    <property type="method" value="X-ray"/>
    <property type="resolution" value="3.00 A"/>
    <property type="chains" value="A=1-305"/>
</dbReference>
<dbReference type="PDB" id="4IFD">
    <property type="method" value="X-ray"/>
    <property type="resolution" value="2.80 A"/>
    <property type="chains" value="A=2-305"/>
</dbReference>
<dbReference type="PDB" id="4OO1">
    <property type="method" value="X-ray"/>
    <property type="resolution" value="3.30 A"/>
    <property type="chains" value="A=1-305"/>
</dbReference>
<dbReference type="PDB" id="5C0W">
    <property type="method" value="X-ray"/>
    <property type="resolution" value="4.60 A"/>
    <property type="chains" value="A=1-305"/>
</dbReference>
<dbReference type="PDB" id="5C0X">
    <property type="method" value="X-ray"/>
    <property type="resolution" value="3.81 A"/>
    <property type="chains" value="A=1-305"/>
</dbReference>
<dbReference type="PDB" id="5G06">
    <property type="method" value="EM"/>
    <property type="resolution" value="4.20 A"/>
    <property type="chains" value="A=1-305"/>
</dbReference>
<dbReference type="PDB" id="5JEA">
    <property type="method" value="X-ray"/>
    <property type="resolution" value="2.65 A"/>
    <property type="chains" value="A=1-305"/>
</dbReference>
<dbReference type="PDB" id="5K36">
    <property type="method" value="X-ray"/>
    <property type="resolution" value="3.10 A"/>
    <property type="chains" value="A=1-305"/>
</dbReference>
<dbReference type="PDB" id="5OKZ">
    <property type="method" value="X-ray"/>
    <property type="resolution" value="3.20 A"/>
    <property type="chains" value="A/K/U/e=1-305"/>
</dbReference>
<dbReference type="PDB" id="5VZJ">
    <property type="method" value="X-ray"/>
    <property type="resolution" value="3.30 A"/>
    <property type="chains" value="A=1-305"/>
</dbReference>
<dbReference type="PDB" id="6FSZ">
    <property type="method" value="EM"/>
    <property type="resolution" value="4.60 A"/>
    <property type="chains" value="AA=3-305"/>
</dbReference>
<dbReference type="PDB" id="6LQS">
    <property type="method" value="EM"/>
    <property type="resolution" value="3.80 A"/>
    <property type="chains" value="R5=1-305"/>
</dbReference>
<dbReference type="PDB" id="7AJT">
    <property type="method" value="EM"/>
    <property type="resolution" value="4.60 A"/>
    <property type="chains" value="EB=1-305"/>
</dbReference>
<dbReference type="PDB" id="7AJU">
    <property type="method" value="EM"/>
    <property type="resolution" value="3.80 A"/>
    <property type="chains" value="EB=1-305"/>
</dbReference>
<dbReference type="PDB" id="7D4I">
    <property type="method" value="EM"/>
    <property type="resolution" value="4.00 A"/>
    <property type="chains" value="R5=1-305"/>
</dbReference>
<dbReference type="PDB" id="8QCF">
    <property type="method" value="EM"/>
    <property type="resolution" value="2.55 A"/>
    <property type="chains" value="B=1-305"/>
</dbReference>
<dbReference type="PDBsum" id="2WP8"/>
<dbReference type="PDBsum" id="4IFD"/>
<dbReference type="PDBsum" id="4OO1"/>
<dbReference type="PDBsum" id="5C0W"/>
<dbReference type="PDBsum" id="5C0X"/>
<dbReference type="PDBsum" id="5G06"/>
<dbReference type="PDBsum" id="5JEA"/>
<dbReference type="PDBsum" id="5K36"/>
<dbReference type="PDBsum" id="5OKZ"/>
<dbReference type="PDBsum" id="5VZJ"/>
<dbReference type="PDBsum" id="6FSZ"/>
<dbReference type="PDBsum" id="6LQS"/>
<dbReference type="PDBsum" id="7AJT"/>
<dbReference type="PDBsum" id="7AJU"/>
<dbReference type="PDBsum" id="7D4I"/>
<dbReference type="PDBsum" id="8QCF"/>
<dbReference type="EMDB" id="EMD-0952"/>
<dbReference type="EMDB" id="EMD-11807"/>
<dbReference type="EMDB" id="EMD-11808"/>
<dbReference type="EMDB" id="EMD-18329"/>
<dbReference type="EMDB" id="EMD-30574"/>
<dbReference type="EMDB" id="EMD-4301"/>
<dbReference type="SMR" id="Q05636"/>
<dbReference type="BioGRID" id="32333">
    <property type="interactions" value="146"/>
</dbReference>
<dbReference type="ComplexPortal" id="CPX-599">
    <property type="entry name" value="Nuclear/nucleolar exosome complex, DIS3-RRP6 variant"/>
</dbReference>
<dbReference type="ComplexPortal" id="CPX-603">
    <property type="entry name" value="Cytoplasmic exosome complex, DIS3 variant"/>
</dbReference>
<dbReference type="DIP" id="DIP-2084N"/>
<dbReference type="FunCoup" id="Q05636">
    <property type="interactions" value="1088"/>
</dbReference>
<dbReference type="IntAct" id="Q05636">
    <property type="interactions" value="72"/>
</dbReference>
<dbReference type="MINT" id="Q05636"/>
<dbReference type="STRING" id="4932.YDR280W"/>
<dbReference type="iPTMnet" id="Q05636"/>
<dbReference type="PaxDb" id="4932-YDR280W"/>
<dbReference type="PeptideAtlas" id="Q05636"/>
<dbReference type="EnsemblFungi" id="YDR280W_mRNA">
    <property type="protein sequence ID" value="YDR280W"/>
    <property type="gene ID" value="YDR280W"/>
</dbReference>
<dbReference type="GeneID" id="851874"/>
<dbReference type="KEGG" id="sce:YDR280W"/>
<dbReference type="AGR" id="SGD:S000002688"/>
<dbReference type="SGD" id="S000002688">
    <property type="gene designation" value="RRP45"/>
</dbReference>
<dbReference type="VEuPathDB" id="FungiDB:YDR280W"/>
<dbReference type="eggNOG" id="KOG1614">
    <property type="taxonomic scope" value="Eukaryota"/>
</dbReference>
<dbReference type="GeneTree" id="ENSGT00950000183130"/>
<dbReference type="HOGENOM" id="CLU_038194_0_0_1"/>
<dbReference type="InParanoid" id="Q05636"/>
<dbReference type="OMA" id="GPQFENG"/>
<dbReference type="OrthoDB" id="10264038at2759"/>
<dbReference type="BioCyc" id="YEAST:G3O-29845-MONOMER"/>
<dbReference type="Reactome" id="R-SCE-429958">
    <property type="pathway name" value="mRNA decay by 3' to 5' exoribonuclease"/>
</dbReference>
<dbReference type="Reactome" id="R-SCE-450385">
    <property type="pathway name" value="Butyrate Response Factor 1 (BRF1) binds and destabilizes mRNA"/>
</dbReference>
<dbReference type="Reactome" id="R-SCE-450513">
    <property type="pathway name" value="Tristetraprolin (TTP, ZFP36) binds and destabilizes mRNA"/>
</dbReference>
<dbReference type="Reactome" id="R-SCE-6791226">
    <property type="pathway name" value="Major pathway of rRNA processing in the nucleolus and cytosol"/>
</dbReference>
<dbReference type="BioGRID-ORCS" id="851874">
    <property type="hits" value="7 hits in 10 CRISPR screens"/>
</dbReference>
<dbReference type="CD-CODE" id="BDAE0F88">
    <property type="entry name" value="Nucleolus"/>
</dbReference>
<dbReference type="EvolutionaryTrace" id="Q05636"/>
<dbReference type="PRO" id="PR:Q05636"/>
<dbReference type="Proteomes" id="UP000002311">
    <property type="component" value="Chromosome IV"/>
</dbReference>
<dbReference type="RNAct" id="Q05636">
    <property type="molecule type" value="protein"/>
</dbReference>
<dbReference type="GO" id="GO:0000177">
    <property type="term" value="C:cytoplasmic exosome (RNase complex)"/>
    <property type="evidence" value="ECO:0000314"/>
    <property type="project" value="SGD"/>
</dbReference>
<dbReference type="GO" id="GO:0000178">
    <property type="term" value="C:exosome (RNase complex)"/>
    <property type="evidence" value="ECO:0000353"/>
    <property type="project" value="ComplexPortal"/>
</dbReference>
<dbReference type="GO" id="GO:0000176">
    <property type="term" value="C:nuclear exosome (RNase complex)"/>
    <property type="evidence" value="ECO:0000314"/>
    <property type="project" value="SGD"/>
</dbReference>
<dbReference type="GO" id="GO:0005730">
    <property type="term" value="C:nucleolus"/>
    <property type="evidence" value="ECO:0000314"/>
    <property type="project" value="SGD"/>
</dbReference>
<dbReference type="GO" id="GO:0005634">
    <property type="term" value="C:nucleus"/>
    <property type="evidence" value="ECO:0000314"/>
    <property type="project" value="ComplexPortal"/>
</dbReference>
<dbReference type="GO" id="GO:0035925">
    <property type="term" value="F:mRNA 3'-UTR AU-rich region binding"/>
    <property type="evidence" value="ECO:0000318"/>
    <property type="project" value="GO_Central"/>
</dbReference>
<dbReference type="GO" id="GO:0000467">
    <property type="term" value="P:exonucleolytic trimming to generate mature 3'-end of 5.8S rRNA from tricistronic rRNA transcript (SSU-rRNA, 5.8S rRNA, LSU-rRNA)"/>
    <property type="evidence" value="ECO:0000315"/>
    <property type="project" value="SGD"/>
</dbReference>
<dbReference type="GO" id="GO:0071028">
    <property type="term" value="P:nuclear mRNA surveillance"/>
    <property type="evidence" value="ECO:0000318"/>
    <property type="project" value="GO_Central"/>
</dbReference>
<dbReference type="GO" id="GO:0071035">
    <property type="term" value="P:nuclear polyadenylation-dependent rRNA catabolic process"/>
    <property type="evidence" value="ECO:0000315"/>
    <property type="project" value="SGD"/>
</dbReference>
<dbReference type="GO" id="GO:0006401">
    <property type="term" value="P:RNA catabolic process"/>
    <property type="evidence" value="ECO:0000314"/>
    <property type="project" value="ComplexPortal"/>
</dbReference>
<dbReference type="GO" id="GO:0006396">
    <property type="term" value="P:RNA processing"/>
    <property type="evidence" value="ECO:0000314"/>
    <property type="project" value="ComplexPortal"/>
</dbReference>
<dbReference type="GO" id="GO:0016075">
    <property type="term" value="P:rRNA catabolic process"/>
    <property type="evidence" value="ECO:0000318"/>
    <property type="project" value="GO_Central"/>
</dbReference>
<dbReference type="GO" id="GO:0071038">
    <property type="term" value="P:TRAMP-dependent tRNA surveillance pathway"/>
    <property type="evidence" value="ECO:0000314"/>
    <property type="project" value="SGD"/>
</dbReference>
<dbReference type="GO" id="GO:0034473">
    <property type="term" value="P:U1 snRNA 3'-end processing"/>
    <property type="evidence" value="ECO:0000315"/>
    <property type="project" value="SGD"/>
</dbReference>
<dbReference type="GO" id="GO:0034475">
    <property type="term" value="P:U4 snRNA 3'-end processing"/>
    <property type="evidence" value="ECO:0000315"/>
    <property type="project" value="SGD"/>
</dbReference>
<dbReference type="GO" id="GO:0034476">
    <property type="term" value="P:U5 snRNA 3'-end processing"/>
    <property type="evidence" value="ECO:0000315"/>
    <property type="project" value="SGD"/>
</dbReference>
<dbReference type="CDD" id="cd11368">
    <property type="entry name" value="RNase_PH_RRP45"/>
    <property type="match status" value="1"/>
</dbReference>
<dbReference type="FunFam" id="3.30.230.70:FF:000005">
    <property type="entry name" value="Exosome complex component RRP45"/>
    <property type="match status" value="1"/>
</dbReference>
<dbReference type="Gene3D" id="3.30.230.70">
    <property type="entry name" value="GHMP Kinase, N-terminal domain"/>
    <property type="match status" value="1"/>
</dbReference>
<dbReference type="InterPro" id="IPR001247">
    <property type="entry name" value="ExoRNase_PH_dom1"/>
</dbReference>
<dbReference type="InterPro" id="IPR015847">
    <property type="entry name" value="ExoRNase_PH_dom2"/>
</dbReference>
<dbReference type="InterPro" id="IPR036345">
    <property type="entry name" value="ExoRNase_PH_dom2_sf"/>
</dbReference>
<dbReference type="InterPro" id="IPR050590">
    <property type="entry name" value="Exosome_comp_Rrp42_subfam"/>
</dbReference>
<dbReference type="InterPro" id="IPR027408">
    <property type="entry name" value="PNPase/RNase_PH_dom_sf"/>
</dbReference>
<dbReference type="InterPro" id="IPR020568">
    <property type="entry name" value="Ribosomal_Su5_D2-typ_SF"/>
</dbReference>
<dbReference type="InterPro" id="IPR033100">
    <property type="entry name" value="Rrp45"/>
</dbReference>
<dbReference type="PANTHER" id="PTHR11097:SF14">
    <property type="entry name" value="EXOSOME COMPLEX COMPONENT RRP45"/>
    <property type="match status" value="1"/>
</dbReference>
<dbReference type="PANTHER" id="PTHR11097">
    <property type="entry name" value="EXOSOME COMPLEX EXONUCLEASE RIBOSOMAL RNA PROCESSING PROTEIN"/>
    <property type="match status" value="1"/>
</dbReference>
<dbReference type="Pfam" id="PF01138">
    <property type="entry name" value="RNase_PH"/>
    <property type="match status" value="1"/>
</dbReference>
<dbReference type="Pfam" id="PF03725">
    <property type="entry name" value="RNase_PH_C"/>
    <property type="match status" value="1"/>
</dbReference>
<dbReference type="SUPFAM" id="SSF55666">
    <property type="entry name" value="Ribonuclease PH domain 2-like"/>
    <property type="match status" value="1"/>
</dbReference>
<dbReference type="SUPFAM" id="SSF54211">
    <property type="entry name" value="Ribosomal protein S5 domain 2-like"/>
    <property type="match status" value="1"/>
</dbReference>
<keyword id="KW-0002">3D-structure</keyword>
<keyword id="KW-0963">Cytoplasm</keyword>
<keyword id="KW-0271">Exosome</keyword>
<keyword id="KW-0539">Nucleus</keyword>
<keyword id="KW-1185">Reference proteome</keyword>
<keyword id="KW-0694">RNA-binding</keyword>
<keyword id="KW-0698">rRNA processing</keyword>
<accession>Q05636</accession>
<accession>D6VSR0</accession>
<protein>
    <recommendedName>
        <fullName>Exosome complex component RRP45</fullName>
    </recommendedName>
    <alternativeName>
        <fullName>Ribosomal RNA-processing protein 45</fullName>
    </alternativeName>
</protein>
<reference key="1">
    <citation type="journal article" date="1997" name="Nature">
        <title>The nucleotide sequence of Saccharomyces cerevisiae chromosome IV.</title>
        <authorList>
            <person name="Jacq C."/>
            <person name="Alt-Moerbe J."/>
            <person name="Andre B."/>
            <person name="Arnold W."/>
            <person name="Bahr A."/>
            <person name="Ballesta J.P.G."/>
            <person name="Bargues M."/>
            <person name="Baron L."/>
            <person name="Becker A."/>
            <person name="Biteau N."/>
            <person name="Bloecker H."/>
            <person name="Blugeon C."/>
            <person name="Boskovic J."/>
            <person name="Brandt P."/>
            <person name="Brueckner M."/>
            <person name="Buitrago M.J."/>
            <person name="Coster F."/>
            <person name="Delaveau T."/>
            <person name="del Rey F."/>
            <person name="Dujon B."/>
            <person name="Eide L.G."/>
            <person name="Garcia-Cantalejo J.M."/>
            <person name="Goffeau A."/>
            <person name="Gomez-Peris A."/>
            <person name="Granotier C."/>
            <person name="Hanemann V."/>
            <person name="Hankeln T."/>
            <person name="Hoheisel J.D."/>
            <person name="Jaeger W."/>
            <person name="Jimenez A."/>
            <person name="Jonniaux J.-L."/>
            <person name="Kraemer C."/>
            <person name="Kuester H."/>
            <person name="Laamanen P."/>
            <person name="Legros Y."/>
            <person name="Louis E.J."/>
            <person name="Moeller-Rieker S."/>
            <person name="Monnet A."/>
            <person name="Moro M."/>
            <person name="Mueller-Auer S."/>
            <person name="Nussbaumer B."/>
            <person name="Paricio N."/>
            <person name="Paulin L."/>
            <person name="Perea J."/>
            <person name="Perez-Alonso M."/>
            <person name="Perez-Ortin J.E."/>
            <person name="Pohl T.M."/>
            <person name="Prydz H."/>
            <person name="Purnelle B."/>
            <person name="Rasmussen S.W."/>
            <person name="Remacha M.A."/>
            <person name="Revuelta J.L."/>
            <person name="Rieger M."/>
            <person name="Salom D."/>
            <person name="Saluz H.P."/>
            <person name="Saiz J.E."/>
            <person name="Saren A.-M."/>
            <person name="Schaefer M."/>
            <person name="Scharfe M."/>
            <person name="Schmidt E.R."/>
            <person name="Schneider C."/>
            <person name="Scholler P."/>
            <person name="Schwarz S."/>
            <person name="Soler-Mira A."/>
            <person name="Urrestarazu L.A."/>
            <person name="Verhasselt P."/>
            <person name="Vissers S."/>
            <person name="Voet M."/>
            <person name="Volckaert G."/>
            <person name="Wagner G."/>
            <person name="Wambutt R."/>
            <person name="Wedler E."/>
            <person name="Wedler H."/>
            <person name="Woelfl S."/>
            <person name="Harris D.E."/>
            <person name="Bowman S."/>
            <person name="Brown D."/>
            <person name="Churcher C.M."/>
            <person name="Connor R."/>
            <person name="Dedman K."/>
            <person name="Gentles S."/>
            <person name="Hamlin N."/>
            <person name="Hunt S."/>
            <person name="Jones L."/>
            <person name="McDonald S."/>
            <person name="Murphy L.D."/>
            <person name="Niblett D."/>
            <person name="Odell C."/>
            <person name="Oliver K."/>
            <person name="Rajandream M.A."/>
            <person name="Richards C."/>
            <person name="Shore L."/>
            <person name="Walsh S.V."/>
            <person name="Barrell B.G."/>
            <person name="Dietrich F.S."/>
            <person name="Mulligan J.T."/>
            <person name="Allen E."/>
            <person name="Araujo R."/>
            <person name="Aviles E."/>
            <person name="Berno A."/>
            <person name="Carpenter J."/>
            <person name="Chen E."/>
            <person name="Cherry J.M."/>
            <person name="Chung E."/>
            <person name="Duncan M."/>
            <person name="Hunicke-Smith S."/>
            <person name="Hyman R.W."/>
            <person name="Komp C."/>
            <person name="Lashkari D."/>
            <person name="Lew H."/>
            <person name="Lin D."/>
            <person name="Mosedale D."/>
            <person name="Nakahara K."/>
            <person name="Namath A."/>
            <person name="Oefner P."/>
            <person name="Oh C."/>
            <person name="Petel F.X."/>
            <person name="Roberts D."/>
            <person name="Schramm S."/>
            <person name="Schroeder M."/>
            <person name="Shogren T."/>
            <person name="Shroff N."/>
            <person name="Winant A."/>
            <person name="Yelton M.A."/>
            <person name="Botstein D."/>
            <person name="Davis R.W."/>
            <person name="Johnston M."/>
            <person name="Andrews S."/>
            <person name="Brinkman R."/>
            <person name="Cooper J."/>
            <person name="Ding H."/>
            <person name="Du Z."/>
            <person name="Favello A."/>
            <person name="Fulton L."/>
            <person name="Gattung S."/>
            <person name="Greco T."/>
            <person name="Hallsworth K."/>
            <person name="Hawkins J."/>
            <person name="Hillier L.W."/>
            <person name="Jier M."/>
            <person name="Johnson D."/>
            <person name="Johnston L."/>
            <person name="Kirsten J."/>
            <person name="Kucaba T."/>
            <person name="Langston Y."/>
            <person name="Latreille P."/>
            <person name="Le T."/>
            <person name="Mardis E."/>
            <person name="Menezes S."/>
            <person name="Miller N."/>
            <person name="Nhan M."/>
            <person name="Pauley A."/>
            <person name="Peluso D."/>
            <person name="Rifkin L."/>
            <person name="Riles L."/>
            <person name="Taich A."/>
            <person name="Trevaskis E."/>
            <person name="Vignati D."/>
            <person name="Wilcox L."/>
            <person name="Wohldman P."/>
            <person name="Vaudin M."/>
            <person name="Wilson R."/>
            <person name="Waterston R."/>
            <person name="Albermann K."/>
            <person name="Hani J."/>
            <person name="Heumann K."/>
            <person name="Kleine K."/>
            <person name="Mewes H.-W."/>
            <person name="Zollner A."/>
            <person name="Zaccaria P."/>
        </authorList>
    </citation>
    <scope>NUCLEOTIDE SEQUENCE [LARGE SCALE GENOMIC DNA]</scope>
    <source>
        <strain>ATCC 204508 / S288c</strain>
    </source>
</reference>
<reference key="2">
    <citation type="journal article" date="2014" name="G3 (Bethesda)">
        <title>The reference genome sequence of Saccharomyces cerevisiae: Then and now.</title>
        <authorList>
            <person name="Engel S.R."/>
            <person name="Dietrich F.S."/>
            <person name="Fisk D.G."/>
            <person name="Binkley G."/>
            <person name="Balakrishnan R."/>
            <person name="Costanzo M.C."/>
            <person name="Dwight S.S."/>
            <person name="Hitz B.C."/>
            <person name="Karra K."/>
            <person name="Nash R.S."/>
            <person name="Weng S."/>
            <person name="Wong E.D."/>
            <person name="Lloyd P."/>
            <person name="Skrzypek M.S."/>
            <person name="Miyasato S.R."/>
            <person name="Simison M."/>
            <person name="Cherry J.M."/>
        </authorList>
    </citation>
    <scope>GENOME REANNOTATION</scope>
    <source>
        <strain>ATCC 204508 / S288c</strain>
    </source>
</reference>
<reference key="3">
    <citation type="journal article" date="2007" name="Genome Res.">
        <title>Approaching a complete repository of sequence-verified protein-encoding clones for Saccharomyces cerevisiae.</title>
        <authorList>
            <person name="Hu Y."/>
            <person name="Rolfs A."/>
            <person name="Bhullar B."/>
            <person name="Murthy T.V.S."/>
            <person name="Zhu C."/>
            <person name="Berger M.F."/>
            <person name="Camargo A.A."/>
            <person name="Kelley F."/>
            <person name="McCarron S."/>
            <person name="Jepson D."/>
            <person name="Richardson A."/>
            <person name="Raphael J."/>
            <person name="Moreira D."/>
            <person name="Taycher E."/>
            <person name="Zuo D."/>
            <person name="Mohr S."/>
            <person name="Kane M.F."/>
            <person name="Williamson J."/>
            <person name="Simpson A.J.G."/>
            <person name="Bulyk M.L."/>
            <person name="Harlow E."/>
            <person name="Marsischky G."/>
            <person name="Kolodner R.D."/>
            <person name="LaBaer J."/>
        </authorList>
    </citation>
    <scope>NUCLEOTIDE SEQUENCE [GENOMIC DNA]</scope>
    <source>
        <strain>ATCC 204508 / S288c</strain>
    </source>
</reference>
<reference key="4">
    <citation type="journal article" date="1999" name="Genes Dev.">
        <title>The yeast exosome and human PM-Scl are related complexes of 3'--&gt;5' exonucleases.</title>
        <authorList>
            <person name="Allmang C."/>
            <person name="Petfalski E."/>
            <person name="Podtelejnikov A."/>
            <person name="Mann M."/>
            <person name="Tollervey D."/>
            <person name="Mitchell P."/>
        </authorList>
    </citation>
    <scope>FUNCTION</scope>
    <scope>SUBUNIT</scope>
</reference>
<reference key="5">
    <citation type="journal article" date="2003" name="Cell">
        <title>A panoramic view of yeast noncoding RNA processing.</title>
        <authorList>
            <person name="Peng W.-T."/>
            <person name="Robinson M.D."/>
            <person name="Mnaimneh S."/>
            <person name="Krogan N.J."/>
            <person name="Cagney G."/>
            <person name="Morris Q.D."/>
            <person name="Davierwala A.P."/>
            <person name="Grigull J."/>
            <person name="Yang X."/>
            <person name="Zhang W."/>
            <person name="Mitsakakis N."/>
            <person name="Ryan O.W."/>
            <person name="Datta N."/>
            <person name="Jojic V."/>
            <person name="Pal C."/>
            <person name="Canadien V."/>
            <person name="Richards D.P."/>
            <person name="Beattie B."/>
            <person name="Wu L.F."/>
            <person name="Altschuler S.J."/>
            <person name="Roweis S."/>
            <person name="Frey B.J."/>
            <person name="Emili A."/>
            <person name="Greenblatt J.F."/>
            <person name="Hughes T.R."/>
        </authorList>
    </citation>
    <scope>INTERACTION WITH LRP1</scope>
</reference>
<reference key="6">
    <citation type="journal article" date="2003" name="Nature">
        <title>Global analysis of protein localization in budding yeast.</title>
        <authorList>
            <person name="Huh W.-K."/>
            <person name="Falvo J.V."/>
            <person name="Gerke L.C."/>
            <person name="Carroll A.S."/>
            <person name="Howson R.W."/>
            <person name="Weissman J.S."/>
            <person name="O'Shea E.K."/>
        </authorList>
    </citation>
    <scope>SUBCELLULAR LOCATION [LARGE SCALE ANALYSIS]</scope>
</reference>
<reference key="7">
    <citation type="journal article" date="2003" name="Nature">
        <title>Global analysis of protein expression in yeast.</title>
        <authorList>
            <person name="Ghaemmaghami S."/>
            <person name="Huh W.-K."/>
            <person name="Bower K."/>
            <person name="Howson R.W."/>
            <person name="Belle A."/>
            <person name="Dephoure N."/>
            <person name="O'Shea E.K."/>
            <person name="Weissman J.S."/>
        </authorList>
    </citation>
    <scope>LEVEL OF PROTEIN EXPRESSION [LARGE SCALE ANALYSIS]</scope>
</reference>
<reference key="8">
    <citation type="journal article" date="2006" name="Cell">
        <title>Reconstitution, activities, and structure of the eukaryotic RNA exosome.</title>
        <authorList>
            <person name="Liu Q."/>
            <person name="Greimann J.C."/>
            <person name="Lima C.D."/>
        </authorList>
    </citation>
    <scope>RECONSTITUTION OF THE RNA EXOSOME COMPLEX</scope>
    <scope>LACK OF EXONUCLEASE ACTIVITY</scope>
</reference>
<reference key="9">
    <citation type="journal article" date="2007" name="Cell">
        <authorList>
            <person name="Liu Q."/>
            <person name="Greimann J.C."/>
            <person name="Lima C.D."/>
        </authorList>
    </citation>
    <scope>ERRATUM OF PUBMED:17174896</scope>
</reference>
<reference key="10">
    <citation type="journal article" date="2007" name="Nat. Struct. Mol. Biol.">
        <title>A single subunit, Dis3, is essentially responsible for yeast exosome core activity.</title>
        <authorList>
            <person name="Dziembowski A."/>
            <person name="Lorentzen E."/>
            <person name="Conti E."/>
            <person name="Seraphin B."/>
        </authorList>
    </citation>
    <scope>IDENTIFICATION BY MASS SPECTROMETRY</scope>
    <scope>FUNCTION OF THE RNA EXOSOME COMPLEX</scope>
    <scope>SUBUNIT</scope>
</reference>
<reference key="11">
    <citation type="journal article" date="2009" name="Cell">
        <title>The yeast exosome functions as a macromolecular cage to channel RNA substrates for degradation.</title>
        <authorList>
            <person name="Bonneau F."/>
            <person name="Basquin J."/>
            <person name="Ebert J."/>
            <person name="Lorentzen E."/>
            <person name="Conti E."/>
        </authorList>
    </citation>
    <scope>X-RAY CRYSTALLOGRAPHY (3.0 ANGSTROMS) IN COMPLEX WITH SKI6 AND DIS3</scope>
</reference>
<sequence>MAKDIEISASESKFILEALRQNYRLDGRSFDQFRDVEITFGKEFGDVSVKMGNTKVHCRISCQIAQPYEDRPFEGLFVISTEISPMAGSQFENGNITGEDEVLCSRIIEKSVRRSGALDVEGLCIVAGSKCWAVRADVHFLDCDGGFIDASCIAVMAGLMHFKKPDITVHGEQIIVHPVNEREPVPLGILHIPICVTFSFFNPQDTEENIKGETNSEISIIDATLKEELLRDGVLTVTLNKNREVVQVSKAGGLPMDALTLMKCCHEAYSIIEKITDQILQLLKEDSEKRNKYAAMLTSENAREI</sequence>
<organism>
    <name type="scientific">Saccharomyces cerevisiae (strain ATCC 204508 / S288c)</name>
    <name type="common">Baker's yeast</name>
    <dbReference type="NCBI Taxonomy" id="559292"/>
    <lineage>
        <taxon>Eukaryota</taxon>
        <taxon>Fungi</taxon>
        <taxon>Dikarya</taxon>
        <taxon>Ascomycota</taxon>
        <taxon>Saccharomycotina</taxon>
        <taxon>Saccharomycetes</taxon>
        <taxon>Saccharomycetales</taxon>
        <taxon>Saccharomycetaceae</taxon>
        <taxon>Saccharomyces</taxon>
    </lineage>
</organism>
<feature type="chain" id="PRO_0000139974" description="Exosome complex component RRP45">
    <location>
        <begin position="1"/>
        <end position="305"/>
    </location>
</feature>
<feature type="helix" evidence="10">
    <location>
        <begin position="9"/>
        <end position="20"/>
    </location>
</feature>
<feature type="strand" evidence="10">
    <location>
        <begin position="36"/>
        <end position="40"/>
    </location>
</feature>
<feature type="strand" evidence="10">
    <location>
        <begin position="46"/>
        <end position="51"/>
    </location>
</feature>
<feature type="strand" evidence="10">
    <location>
        <begin position="54"/>
        <end position="65"/>
    </location>
</feature>
<feature type="strand" evidence="11">
    <location>
        <begin position="69"/>
        <end position="71"/>
    </location>
</feature>
<feature type="strand" evidence="10">
    <location>
        <begin position="76"/>
        <end position="80"/>
    </location>
</feature>
<feature type="helix" evidence="9">
    <location>
        <begin position="85"/>
        <end position="87"/>
    </location>
</feature>
<feature type="helix" evidence="10">
    <location>
        <begin position="99"/>
        <end position="112"/>
    </location>
</feature>
<feature type="turn" evidence="10">
    <location>
        <begin position="113"/>
        <end position="116"/>
    </location>
</feature>
<feature type="strand" evidence="10">
    <location>
        <begin position="123"/>
        <end position="126"/>
    </location>
</feature>
<feature type="turn" evidence="10">
    <location>
        <begin position="127"/>
        <end position="129"/>
    </location>
</feature>
<feature type="strand" evidence="10">
    <location>
        <begin position="130"/>
        <end position="142"/>
    </location>
</feature>
<feature type="helix" evidence="10">
    <location>
        <begin position="147"/>
        <end position="161"/>
    </location>
</feature>
<feature type="strand" evidence="10">
    <location>
        <begin position="167"/>
        <end position="170"/>
    </location>
</feature>
<feature type="strand" evidence="10">
    <location>
        <begin position="173"/>
        <end position="176"/>
    </location>
</feature>
<feature type="turn" evidence="10">
    <location>
        <begin position="179"/>
        <end position="181"/>
    </location>
</feature>
<feature type="strand" evidence="10">
    <location>
        <begin position="194"/>
        <end position="201"/>
    </location>
</feature>
<feature type="helix" evidence="10">
    <location>
        <begin position="206"/>
        <end position="211"/>
    </location>
</feature>
<feature type="strand" evidence="10">
    <location>
        <begin position="218"/>
        <end position="222"/>
    </location>
</feature>
<feature type="helix" evidence="10">
    <location>
        <begin position="225"/>
        <end position="228"/>
    </location>
</feature>
<feature type="strand" evidence="10">
    <location>
        <begin position="232"/>
        <end position="239"/>
    </location>
</feature>
<feature type="strand" evidence="10">
    <location>
        <begin position="243"/>
        <end position="257"/>
    </location>
</feature>
<feature type="helix" evidence="10">
    <location>
        <begin position="258"/>
        <end position="298"/>
    </location>
</feature>
<feature type="strand" evidence="8">
    <location>
        <begin position="299"/>
        <end position="302"/>
    </location>
</feature>
<comment type="function">
    <text evidence="1 5">Non-catalytic component of the RNA exosome complex which has 3'-&gt;5' exoribonuclease activity and participates in a multitude of cellular RNA processing and degradation events. In the nucleus, the RNA exosome complex is involved in proper maturation of stable RNA species such as rRNA, snRNA and snoRNA, in the elimination of RNA processing by-products and non-coding 'pervasive' transcripts, such as antisense RNA species and cryptic unstable transcripts (CUTs), and of mRNAs with processing defects, thereby limiting or excluding their export to the cytoplasm. In the cytoplasm, the RNA exosome complex is involved in general mRNA turnover and in RNA surveillance pathways, preventing translation of aberrant mRNAs. The catalytic inactive RNA exosome core complex of 9 subunits (Exo-9) is proposed to play a pivotal role in the binding and presentation of RNA for ribonucleolysis, and to serve as a scaffold for the association with catalytic subunits and accessory proteins or complexes. RRP45 is part of the hexameric ring of RNase PH domain-containing subunits proposed to form a central channel which threads RNA substrates for degradation.</text>
</comment>
<comment type="subunit">
    <text evidence="1 2 5 6">Component of the RNA exosome complex. Specifically part of the catalytically inactive RNA exosome core complex (Exo-9) which may associate with the catalytic subunits RRP6 and DIS3 in cytoplasmic- and nuclear-specific RNA exosome complex forms. Exo-9 is formed by a hexameric base ring of RNase PH domain-containing subunits and a cap ring consisting of CSL4, RRP4 and RRP40. Interacts with LRP1.</text>
</comment>
<comment type="interaction">
    <interactant intactId="EBI-1810">
        <id>Q05636</id>
    </interactant>
    <interactant intactId="EBI-1731">
        <id>P53859</id>
        <label>CSL4</label>
    </interactant>
    <organismsDiffer>false</organismsDiffer>
    <experiments>16</experiments>
</comment>
<comment type="interaction">
    <interactant intactId="EBI-1810">
        <id>Q05636</id>
    </interactant>
    <interactant intactId="EBI-1788">
        <id>P46948</id>
        <label>SKI6</label>
    </interactant>
    <organismsDiffer>false</organismsDiffer>
    <experiments>12</experiments>
</comment>
<comment type="subcellular location">
    <subcellularLocation>
        <location evidence="3">Cytoplasm</location>
    </subcellularLocation>
    <subcellularLocation>
        <location evidence="3">Nucleus</location>
        <location evidence="3">Nucleolus</location>
    </subcellularLocation>
</comment>
<comment type="miscellaneous">
    <text evidence="4">Present with 4800 molecules/cell in log phase SD medium.</text>
</comment>
<comment type="similarity">
    <text evidence="7">Belongs to the RNase PH family.</text>
</comment>
<comment type="caution">
    <text evidence="7">According to PubMed:17173052 and PubMed:17174896, only DIS3/RRP44 subunit of the exosome core has exonuclease activity.</text>
</comment>